<comment type="function">
    <text evidence="1">This protein binds specifically to 23S rRNA; its binding is stimulated by other ribosomal proteins, e.g. L4, L17, and L20. It is important during the early stages of 50S assembly. It makes multiple contacts with different domains of the 23S rRNA in the assembled 50S subunit and ribosome (By similarity).</text>
</comment>
<comment type="function">
    <text evidence="1">The globular domain of the protein is located near the polypeptide exit tunnel on the outside of the subunit, while an extended beta-hairpin is found that lines the wall of the exit tunnel in the center of the 70S ribosome.</text>
</comment>
<comment type="subunit">
    <text evidence="1">Part of the 50S ribosomal subunit.</text>
</comment>
<comment type="similarity">
    <text evidence="1">Belongs to the universal ribosomal protein uL22 family.</text>
</comment>
<organism>
    <name type="scientific">Enterobacter sp. (strain 638)</name>
    <dbReference type="NCBI Taxonomy" id="399742"/>
    <lineage>
        <taxon>Bacteria</taxon>
        <taxon>Pseudomonadati</taxon>
        <taxon>Pseudomonadota</taxon>
        <taxon>Gammaproteobacteria</taxon>
        <taxon>Enterobacterales</taxon>
        <taxon>Enterobacteriaceae</taxon>
        <taxon>Enterobacter</taxon>
    </lineage>
</organism>
<sequence>METLAQHRHARSSAQKVRLVADLIRGKKVSQALDILTYTNKKAAVFVKKVLESAIANAEHNDGADIDDLKVAKIFVDEGPSMKRIMPRAKGRADRILKRTSHITVVVSDR</sequence>
<reference key="1">
    <citation type="journal article" date="2010" name="PLoS Genet.">
        <title>Genome sequence of the plant growth promoting endophytic bacterium Enterobacter sp. 638.</title>
        <authorList>
            <person name="Taghavi S."/>
            <person name="van der Lelie D."/>
            <person name="Hoffman A."/>
            <person name="Zhang Y.B."/>
            <person name="Walla M.D."/>
            <person name="Vangronsveld J."/>
            <person name="Newman L."/>
            <person name="Monchy S."/>
        </authorList>
    </citation>
    <scope>NUCLEOTIDE SEQUENCE [LARGE SCALE GENOMIC DNA]</scope>
    <source>
        <strain>638</strain>
    </source>
</reference>
<evidence type="ECO:0000255" key="1">
    <source>
        <dbReference type="HAMAP-Rule" id="MF_01331"/>
    </source>
</evidence>
<evidence type="ECO:0000305" key="2"/>
<gene>
    <name evidence="1" type="primary">rplV</name>
    <name type="ordered locus">Ent638_3746</name>
</gene>
<name>RL22_ENT38</name>
<dbReference type="EMBL" id="CP000653">
    <property type="protein sequence ID" value="ABP62403.1"/>
    <property type="molecule type" value="Genomic_DNA"/>
</dbReference>
<dbReference type="RefSeq" id="WP_015960714.1">
    <property type="nucleotide sequence ID" value="NC_009436.1"/>
</dbReference>
<dbReference type="SMR" id="A4WFC3"/>
<dbReference type="STRING" id="399742.Ent638_3746"/>
<dbReference type="GeneID" id="93306721"/>
<dbReference type="KEGG" id="ent:Ent638_3746"/>
<dbReference type="eggNOG" id="COG0091">
    <property type="taxonomic scope" value="Bacteria"/>
</dbReference>
<dbReference type="HOGENOM" id="CLU_083987_3_3_6"/>
<dbReference type="OrthoDB" id="9805969at2"/>
<dbReference type="Proteomes" id="UP000000230">
    <property type="component" value="Chromosome"/>
</dbReference>
<dbReference type="GO" id="GO:0022625">
    <property type="term" value="C:cytosolic large ribosomal subunit"/>
    <property type="evidence" value="ECO:0007669"/>
    <property type="project" value="TreeGrafter"/>
</dbReference>
<dbReference type="GO" id="GO:0019843">
    <property type="term" value="F:rRNA binding"/>
    <property type="evidence" value="ECO:0007669"/>
    <property type="project" value="UniProtKB-UniRule"/>
</dbReference>
<dbReference type="GO" id="GO:0003735">
    <property type="term" value="F:structural constituent of ribosome"/>
    <property type="evidence" value="ECO:0007669"/>
    <property type="project" value="InterPro"/>
</dbReference>
<dbReference type="GO" id="GO:0006412">
    <property type="term" value="P:translation"/>
    <property type="evidence" value="ECO:0007669"/>
    <property type="project" value="UniProtKB-UniRule"/>
</dbReference>
<dbReference type="CDD" id="cd00336">
    <property type="entry name" value="Ribosomal_L22"/>
    <property type="match status" value="1"/>
</dbReference>
<dbReference type="FunFam" id="3.90.470.10:FF:000001">
    <property type="entry name" value="50S ribosomal protein L22"/>
    <property type="match status" value="1"/>
</dbReference>
<dbReference type="Gene3D" id="3.90.470.10">
    <property type="entry name" value="Ribosomal protein L22/L17"/>
    <property type="match status" value="1"/>
</dbReference>
<dbReference type="HAMAP" id="MF_01331_B">
    <property type="entry name" value="Ribosomal_uL22_B"/>
    <property type="match status" value="1"/>
</dbReference>
<dbReference type="InterPro" id="IPR001063">
    <property type="entry name" value="Ribosomal_uL22"/>
</dbReference>
<dbReference type="InterPro" id="IPR005727">
    <property type="entry name" value="Ribosomal_uL22_bac/chlpt-type"/>
</dbReference>
<dbReference type="InterPro" id="IPR047867">
    <property type="entry name" value="Ribosomal_uL22_bac/org-type"/>
</dbReference>
<dbReference type="InterPro" id="IPR018260">
    <property type="entry name" value="Ribosomal_uL22_CS"/>
</dbReference>
<dbReference type="InterPro" id="IPR036394">
    <property type="entry name" value="Ribosomal_uL22_sf"/>
</dbReference>
<dbReference type="NCBIfam" id="TIGR01044">
    <property type="entry name" value="rplV_bact"/>
    <property type="match status" value="1"/>
</dbReference>
<dbReference type="PANTHER" id="PTHR13501">
    <property type="entry name" value="CHLOROPLAST 50S RIBOSOMAL PROTEIN L22-RELATED"/>
    <property type="match status" value="1"/>
</dbReference>
<dbReference type="PANTHER" id="PTHR13501:SF8">
    <property type="entry name" value="LARGE RIBOSOMAL SUBUNIT PROTEIN UL22M"/>
    <property type="match status" value="1"/>
</dbReference>
<dbReference type="Pfam" id="PF00237">
    <property type="entry name" value="Ribosomal_L22"/>
    <property type="match status" value="1"/>
</dbReference>
<dbReference type="SUPFAM" id="SSF54843">
    <property type="entry name" value="Ribosomal protein L22"/>
    <property type="match status" value="1"/>
</dbReference>
<dbReference type="PROSITE" id="PS00464">
    <property type="entry name" value="RIBOSOMAL_L22"/>
    <property type="match status" value="1"/>
</dbReference>
<keyword id="KW-0687">Ribonucleoprotein</keyword>
<keyword id="KW-0689">Ribosomal protein</keyword>
<keyword id="KW-0694">RNA-binding</keyword>
<keyword id="KW-0699">rRNA-binding</keyword>
<feature type="chain" id="PRO_1000067610" description="Large ribosomal subunit protein uL22">
    <location>
        <begin position="1"/>
        <end position="110"/>
    </location>
</feature>
<accession>A4WFC3</accession>
<proteinExistence type="inferred from homology"/>
<protein>
    <recommendedName>
        <fullName evidence="1">Large ribosomal subunit protein uL22</fullName>
    </recommendedName>
    <alternativeName>
        <fullName evidence="2">50S ribosomal protein L22</fullName>
    </alternativeName>
</protein>